<feature type="chain" id="PRO_0000399471" description="1,4-dihydroxy-2-naphthoyl-CoA synthase">
    <location>
        <begin position="1"/>
        <end position="314"/>
    </location>
</feature>
<feature type="binding site" description="in other chain" evidence="2 3 6">
    <location>
        <position position="58"/>
    </location>
    <ligand>
        <name>substrate</name>
        <note>ligand shared between two neighboring subunits</note>
    </ligand>
</feature>
<feature type="binding site" description="in other chain" evidence="3 6">
    <location>
        <position position="95"/>
    </location>
    <ligand>
        <name>substrate</name>
        <note>ligand shared between two neighboring subunits</note>
    </ligand>
</feature>
<feature type="binding site" description="in other chain" evidence="2 3 4 6">
    <location>
        <begin position="103"/>
        <end position="107"/>
    </location>
    <ligand>
        <name>substrate</name>
        <note>ligand shared between two neighboring subunits</note>
    </ligand>
</feature>
<feature type="binding site" description="in other chain" evidence="1 2">
    <location>
        <position position="115"/>
    </location>
    <ligand>
        <name>substrate</name>
        <note>ligand shared between two neighboring subunits</note>
    </ligand>
</feature>
<feature type="binding site" description="in other chain" evidence="2 3">
    <location>
        <begin position="157"/>
        <end position="161"/>
    </location>
    <ligand>
        <name>substrate</name>
        <note>ligand shared between two neighboring subunits</note>
    </ligand>
</feature>
<feature type="binding site" description="in other chain" evidence="2 3">
    <location>
        <position position="184"/>
    </location>
    <ligand>
        <name>substrate</name>
        <note>ligand shared between two neighboring subunits</note>
    </ligand>
</feature>
<feature type="binding site" description="in other chain" evidence="2 9">
    <location>
        <position position="190"/>
    </location>
    <ligand>
        <name>substrate</name>
        <note>ligand shared between two neighboring subunits</note>
    </ligand>
</feature>
<feature type="binding site" evidence="1 2">
    <location>
        <position position="287"/>
    </location>
    <ligand>
        <name>substrate</name>
        <note>ligand shared between two neighboring subunits</note>
    </ligand>
</feature>
<feature type="binding site" evidence="1 2">
    <location>
        <position position="302"/>
    </location>
    <ligand>
        <name>substrate</name>
        <note>ligand shared between two neighboring subunits</note>
    </ligand>
</feature>
<feature type="site" description="Important for catalysis" evidence="1 2">
    <location>
        <position position="115"/>
    </location>
</feature>
<feature type="site" description="Important for catalysis" evidence="2 8 9">
    <location>
        <position position="185"/>
    </location>
</feature>
<feature type="site" description="Important for catalysis" evidence="1 2 7">
    <location>
        <position position="287"/>
    </location>
</feature>
<feature type="mutagenesis site" description="Loss of DHNA-CoA synthase activity." evidence="3">
    <original>R</original>
    <variation>A</variation>
    <location>
        <position position="133"/>
    </location>
</feature>
<feature type="mutagenesis site" description="Nearly abolishes DHNA-CoA synthase activity." evidence="6">
    <original>D</original>
    <variation>E</variation>
    <location>
        <position position="185"/>
    </location>
</feature>
<feature type="mutagenesis site" description="Loss of DHNA-CoA synthase activity." evidence="3 5">
    <original>D</original>
    <variation>G</variation>
    <variation>N</variation>
    <location>
        <position position="185"/>
    </location>
</feature>
<feature type="mutagenesis site" description="Reduces affinity for substrate. Nearly abolishes DHNA-CoA synthase activity." evidence="6">
    <original>S</original>
    <variation>A</variation>
    <location>
        <position position="190"/>
    </location>
</feature>
<feature type="mutagenesis site" description="Loss of DHNA-CoA synthase activity." evidence="3">
    <original>D</original>
    <variation>N</variation>
    <location>
        <position position="192"/>
    </location>
</feature>
<feature type="mutagenesis site" description="Loss of DHNA-CoA synthase activity." evidence="3">
    <original>Y</original>
    <variation>F</variation>
    <location>
        <position position="287"/>
    </location>
</feature>
<feature type="helix" evidence="12">
    <location>
        <begin position="22"/>
        <end position="24"/>
    </location>
</feature>
<feature type="strand" evidence="12">
    <location>
        <begin position="25"/>
        <end position="27"/>
    </location>
</feature>
<feature type="strand" evidence="12">
    <location>
        <begin position="35"/>
        <end position="52"/>
    </location>
</feature>
<feature type="helix" evidence="12">
    <location>
        <begin position="55"/>
        <end position="57"/>
    </location>
</feature>
<feature type="helix" evidence="12">
    <location>
        <begin position="63"/>
        <end position="77"/>
    </location>
</feature>
<feature type="strand" evidence="12">
    <location>
        <begin position="84"/>
        <end position="89"/>
    </location>
</feature>
<feature type="turn" evidence="12">
    <location>
        <begin position="94"/>
        <end position="96"/>
    </location>
</feature>
<feature type="strand" evidence="12">
    <location>
        <begin position="100"/>
        <end position="102"/>
    </location>
</feature>
<feature type="helix" evidence="12">
    <location>
        <begin position="107"/>
        <end position="109"/>
    </location>
</feature>
<feature type="strand" evidence="12">
    <location>
        <begin position="118"/>
        <end position="122"/>
    </location>
</feature>
<feature type="helix" evidence="12">
    <location>
        <begin position="123"/>
        <end position="125"/>
    </location>
</feature>
<feature type="helix" evidence="10">
    <location>
        <begin position="126"/>
        <end position="131"/>
    </location>
</feature>
<feature type="helix" evidence="12">
    <location>
        <begin position="136"/>
        <end position="145"/>
    </location>
</feature>
<feature type="strand" evidence="12">
    <location>
        <begin position="146"/>
        <end position="154"/>
    </location>
</feature>
<feature type="strand" evidence="12">
    <location>
        <begin position="156"/>
        <end position="159"/>
    </location>
</feature>
<feature type="helix" evidence="12">
    <location>
        <begin position="161"/>
        <end position="168"/>
    </location>
</feature>
<feature type="strand" evidence="12">
    <location>
        <begin position="169"/>
        <end position="175"/>
    </location>
</feature>
<feature type="turn" evidence="12">
    <location>
        <begin position="176"/>
        <end position="178"/>
    </location>
</feature>
<feature type="strand" evidence="12">
    <location>
        <begin position="180"/>
        <end position="182"/>
    </location>
</feature>
<feature type="helix" evidence="12">
    <location>
        <begin position="185"/>
        <end position="188"/>
    </location>
</feature>
<feature type="strand" evidence="11">
    <location>
        <begin position="189"/>
        <end position="192"/>
    </location>
</feature>
<feature type="turn" evidence="12">
    <location>
        <begin position="195"/>
        <end position="197"/>
    </location>
</feature>
<feature type="helix" evidence="12">
    <location>
        <begin position="198"/>
        <end position="204"/>
    </location>
</feature>
<feature type="helix" evidence="12">
    <location>
        <begin position="206"/>
        <end position="215"/>
    </location>
</feature>
<feature type="strand" evidence="11">
    <location>
        <begin position="218"/>
        <end position="220"/>
    </location>
</feature>
<feature type="helix" evidence="12">
    <location>
        <begin position="221"/>
        <end position="227"/>
    </location>
</feature>
<feature type="strand" evidence="12">
    <location>
        <begin position="231"/>
        <end position="234"/>
    </location>
</feature>
<feature type="helix" evidence="12">
    <location>
        <begin position="236"/>
        <end position="238"/>
    </location>
</feature>
<feature type="helix" evidence="12">
    <location>
        <begin position="239"/>
        <end position="251"/>
    </location>
</feature>
<feature type="helix" evidence="12">
    <location>
        <begin position="255"/>
        <end position="266"/>
    </location>
</feature>
<feature type="turn" evidence="12">
    <location>
        <begin position="267"/>
        <end position="270"/>
    </location>
</feature>
<feature type="helix" evidence="12">
    <location>
        <begin position="271"/>
        <end position="287"/>
    </location>
</feature>
<feature type="helix" evidence="12">
    <location>
        <begin position="290"/>
        <end position="300"/>
    </location>
</feature>
<comment type="function">
    <text evidence="2 3">Converts o-succinylbenzoyl-CoA (OSB-CoA) to 1,4-dihydroxy-2-naphthoyl-CoA (DHNA-CoA).</text>
</comment>
<comment type="catalytic activity">
    <reaction evidence="2 3 5 6">
        <text>2-succinylbenzoyl-CoA + H(+) = 1,4-dihydroxy-2-naphthoyl-CoA + H2O</text>
        <dbReference type="Rhea" id="RHEA:26562"/>
        <dbReference type="ChEBI" id="CHEBI:15377"/>
        <dbReference type="ChEBI" id="CHEBI:15378"/>
        <dbReference type="ChEBI" id="CHEBI:57364"/>
        <dbReference type="ChEBI" id="CHEBI:58897"/>
        <dbReference type="EC" id="4.1.3.36"/>
    </reaction>
</comment>
<comment type="biophysicochemical properties">
    <kinetics>
        <KM evidence="3">7.3 uM for O-succinylbenzoyl-CoA (at 25 degrees Celsius and pH 7.0)</KM>
        <KM evidence="6">22.4 uM for O-succinylbenzoyl-CoA (at 25 degrees Celsius and pH 7.0)</KM>
        <text evidence="3 6">kcat is 14.9 min(-1) with O-succinylbenzoyl-CoA at 25 degrees Celsius and pH 7.0 (PubMed:12909628). kcat is 4620 sec(-1) with O-succinylbenzoyl-CoA at 25 degrees Celsius and pH 7.0 (PubMed:21830810).</text>
    </kinetics>
</comment>
<comment type="pathway">
    <text evidence="2">Quinol/quinone metabolism; 1,4-dihydroxy-2-naphthoate biosynthesis; 1,4-dihydroxy-2-naphthoate from chorismate: step 6/7.</text>
</comment>
<comment type="pathway">
    <text evidence="2">Quinol/quinone metabolism; menaquinone biosynthesis.</text>
</comment>
<comment type="subunit">
    <text evidence="3 4 6">Homohexamer. Dimer of a homotrimer.</text>
</comment>
<comment type="similarity">
    <text evidence="2">Belongs to the enoyl-CoA hydratase/isomerase family. MenB subfamily.</text>
</comment>
<organism>
    <name type="scientific">Mycobacterium tuberculosis (strain ATCC 25618 / H37Rv)</name>
    <dbReference type="NCBI Taxonomy" id="83332"/>
    <lineage>
        <taxon>Bacteria</taxon>
        <taxon>Bacillati</taxon>
        <taxon>Actinomycetota</taxon>
        <taxon>Actinomycetes</taxon>
        <taxon>Mycobacteriales</taxon>
        <taxon>Mycobacteriaceae</taxon>
        <taxon>Mycobacterium</taxon>
        <taxon>Mycobacterium tuberculosis complex</taxon>
    </lineage>
</organism>
<gene>
    <name evidence="2" type="primary">menB</name>
    <name type="ordered locus">Rv0548c</name>
</gene>
<evidence type="ECO:0000250" key="1">
    <source>
        <dbReference type="UniProtKB" id="P0ABU0"/>
    </source>
</evidence>
<evidence type="ECO:0000255" key="2">
    <source>
        <dbReference type="HAMAP-Rule" id="MF_01934"/>
    </source>
</evidence>
<evidence type="ECO:0000269" key="3">
    <source>
    </source>
</evidence>
<evidence type="ECO:0000269" key="4">
    <source>
    </source>
</evidence>
<evidence type="ECO:0000269" key="5">
    <source>
    </source>
</evidence>
<evidence type="ECO:0000269" key="6">
    <source>
    </source>
</evidence>
<evidence type="ECO:0000305" key="7">
    <source>
    </source>
</evidence>
<evidence type="ECO:0000305" key="8">
    <source>
    </source>
</evidence>
<evidence type="ECO:0000305" key="9">
    <source>
    </source>
</evidence>
<evidence type="ECO:0007829" key="10">
    <source>
        <dbReference type="PDB" id="1Q52"/>
    </source>
</evidence>
<evidence type="ECO:0007829" key="11">
    <source>
        <dbReference type="PDB" id="3T8B"/>
    </source>
</evidence>
<evidence type="ECO:0007829" key="12">
    <source>
        <dbReference type="PDB" id="4QII"/>
    </source>
</evidence>
<accession>P9WNP5</accession>
<accession>L0T442</accession>
<accession>O06414</accession>
<accession>Q7D9N7</accession>
<protein>
    <recommendedName>
        <fullName evidence="2">1,4-dihydroxy-2-naphthoyl-CoA synthase</fullName>
        <shortName evidence="2">DHNA-CoA synthase</shortName>
        <ecNumber evidence="2 3 5 6">4.1.3.36</ecNumber>
    </recommendedName>
</protein>
<proteinExistence type="evidence at protein level"/>
<name>MENB_MYCTU</name>
<keyword id="KW-0002">3D-structure</keyword>
<keyword id="KW-0456">Lyase</keyword>
<keyword id="KW-0474">Menaquinone biosynthesis</keyword>
<keyword id="KW-1185">Reference proteome</keyword>
<reference key="1">
    <citation type="journal article" date="1998" name="Nature">
        <title>Deciphering the biology of Mycobacterium tuberculosis from the complete genome sequence.</title>
        <authorList>
            <person name="Cole S.T."/>
            <person name="Brosch R."/>
            <person name="Parkhill J."/>
            <person name="Garnier T."/>
            <person name="Churcher C.M."/>
            <person name="Harris D.E."/>
            <person name="Gordon S.V."/>
            <person name="Eiglmeier K."/>
            <person name="Gas S."/>
            <person name="Barry C.E. III"/>
            <person name="Tekaia F."/>
            <person name="Badcock K."/>
            <person name="Basham D."/>
            <person name="Brown D."/>
            <person name="Chillingworth T."/>
            <person name="Connor R."/>
            <person name="Davies R.M."/>
            <person name="Devlin K."/>
            <person name="Feltwell T."/>
            <person name="Gentles S."/>
            <person name="Hamlin N."/>
            <person name="Holroyd S."/>
            <person name="Hornsby T."/>
            <person name="Jagels K."/>
            <person name="Krogh A."/>
            <person name="McLean J."/>
            <person name="Moule S."/>
            <person name="Murphy L.D."/>
            <person name="Oliver S."/>
            <person name="Osborne J."/>
            <person name="Quail M.A."/>
            <person name="Rajandream M.A."/>
            <person name="Rogers J."/>
            <person name="Rutter S."/>
            <person name="Seeger K."/>
            <person name="Skelton S."/>
            <person name="Squares S."/>
            <person name="Squares R."/>
            <person name="Sulston J.E."/>
            <person name="Taylor K."/>
            <person name="Whitehead S."/>
            <person name="Barrell B.G."/>
        </authorList>
    </citation>
    <scope>NUCLEOTIDE SEQUENCE [LARGE SCALE GENOMIC DNA]</scope>
    <source>
        <strain>ATCC 25618 / H37Rv</strain>
    </source>
</reference>
<reference key="2">
    <citation type="journal article" date="2010" name="J. Biol. Chem.">
        <title>A bicarbonate cofactor modulates 1,4-dihydroxy-2-naphthoyl-coenzyme a synthase in menaquinone biosynthesis of Escherichia coli.</title>
        <authorList>
            <person name="Jiang M."/>
            <person name="Chen M."/>
            <person name="Guo Z.F."/>
            <person name="Guo Z."/>
        </authorList>
    </citation>
    <scope>SITE</scope>
    <scope>CATALYTIC ACTIVITY</scope>
    <scope>MUTAGENESIS OF ASP-185</scope>
</reference>
<reference key="3">
    <citation type="journal article" date="2011" name="Mol. Cell. Proteomics">
        <title>Proteogenomic analysis of Mycobacterium tuberculosis by high resolution mass spectrometry.</title>
        <authorList>
            <person name="Kelkar D.S."/>
            <person name="Kumar D."/>
            <person name="Kumar P."/>
            <person name="Balakrishnan L."/>
            <person name="Muthusamy B."/>
            <person name="Yadav A.K."/>
            <person name="Shrivastava P."/>
            <person name="Marimuthu A."/>
            <person name="Anand S."/>
            <person name="Sundaram H."/>
            <person name="Kingsbury R."/>
            <person name="Harsha H.C."/>
            <person name="Nair B."/>
            <person name="Prasad T.S."/>
            <person name="Chauhan D.S."/>
            <person name="Katoch K."/>
            <person name="Katoch V.M."/>
            <person name="Kumar P."/>
            <person name="Chaerkady R."/>
            <person name="Ramachandran S."/>
            <person name="Dash D."/>
            <person name="Pandey A."/>
        </authorList>
    </citation>
    <scope>IDENTIFICATION BY MASS SPECTROMETRY [LARGE SCALE ANALYSIS]</scope>
    <source>
        <strain>ATCC 25618 / H37Rv</strain>
    </source>
</reference>
<reference key="4">
    <citation type="journal article" date="2003" name="J. Biol. Chem.">
        <title>Crystal structure of Mycobacterium tuberculosis MenB, a key enzyme in vitamin K2 biosynthesis.</title>
        <authorList>
            <person name="Truglio J.J."/>
            <person name="Theis K."/>
            <person name="Feng Y."/>
            <person name="Gajda R."/>
            <person name="Machutta C."/>
            <person name="Tonge P.J."/>
            <person name="Kisker C."/>
        </authorList>
    </citation>
    <scope>X-RAY CRYSTALLOGRAPHY (2.3 ANGSTROMS) IN COMPLEX WITH SUBSTRATE ANALOGS</scope>
    <scope>FUNCTION AS A DHNA-COA SYNTHASE</scope>
    <scope>CATALYTIC ACTIVITY</scope>
    <scope>MUTAGENESIS OF ARG-133; ASP-185; ASP-192 AND TYR-287</scope>
    <scope>BIOPHYSICOCHEMICAL PROPERTIES</scope>
    <scope>SUBUNIT</scope>
</reference>
<reference key="5">
    <citation type="journal article" date="2005" name="Acta Crystallogr. D">
        <title>Structure of naphthoate synthase (MenB) from Mycobacterium tuberculosis in both native and product-bound forms.</title>
        <authorList>
            <person name="Johnston J.M."/>
            <person name="Arcus V.L."/>
            <person name="Baker E.N."/>
        </authorList>
    </citation>
    <scope>X-RAY CRYSTALLOGRAPHY (2.15 ANGSTROMS) IN COMPLEX WITH SUBSTRATE ANALOGS</scope>
    <scope>SUBUNIT</scope>
</reference>
<reference key="6">
    <citation type="journal article" date="2011" name="Biochemistry">
        <title>Mechanism of the intramolecular Claisen condensation reaction catalyzed by MenB, a crotonase superfamily member.</title>
        <authorList>
            <person name="Li H.J."/>
            <person name="Li X."/>
            <person name="Liu N."/>
            <person name="Zhang H."/>
            <person name="Truglio J.J."/>
            <person name="Mishra S."/>
            <person name="Kisker C."/>
            <person name="Garcia-Diaz M."/>
            <person name="Tonge P.J."/>
        </authorList>
    </citation>
    <scope>X-RAY CRYSTALLOGRAPHY (1.65 ANGSTROMS) IN COMPLEX WITH THE SUBSTRATE ANALOG O-SUCCINYLBENZOYL-N-COENZYME A</scope>
    <scope>CATALYTIC ACTIVITY</scope>
    <scope>BIOPHYSICOCHEMICAL PROPERTIES</scope>
    <scope>SITE</scope>
    <scope>MUTAGENESIS OF ASP-185 AND SER-190</scope>
</reference>
<sequence>MVAPAGEQGRSSTALSDNPFDAKAWRLVDGFDDLTDITYHRHVDDATVRVAFNRPEVRNAFRPHTVDELYRVLDHARMSPDVGVVLLTGNGPSPKDGGWAFCSGGDQRIRGRSGYQYASGDTADTVDVARAGRLHILEVQRLIRFMPKVVICLVNGWAAGGGHSLHVVCDLTLASREYARFKQTDADVGSFDGGYGSAYLARQVGQKFAREIFFLGRTYTAEQMHQMGAVNAVAEHAELETVGLQWAAEINAKSPQAQRMLKFAFNLLDDGLVGQQLFAGEATRLAYMTDEAVEGRDAFLQKRPPDWSPFPRYF</sequence>
<dbReference type="EC" id="4.1.3.36" evidence="2 3 5 6"/>
<dbReference type="EMBL" id="AL123456">
    <property type="protein sequence ID" value="CCP43286.1"/>
    <property type="molecule type" value="Genomic_DNA"/>
</dbReference>
<dbReference type="PIR" id="G70547">
    <property type="entry name" value="G70547"/>
</dbReference>
<dbReference type="RefSeq" id="NP_215062.1">
    <property type="nucleotide sequence ID" value="NC_000962.3"/>
</dbReference>
<dbReference type="RefSeq" id="WP_003402911.1">
    <property type="nucleotide sequence ID" value="NC_000962.3"/>
</dbReference>
<dbReference type="PDB" id="1Q51">
    <property type="method" value="X-ray"/>
    <property type="resolution" value="2.30 A"/>
    <property type="chains" value="A/B/C/D/E/F/G/H/I/J/K/L=1-314"/>
</dbReference>
<dbReference type="PDB" id="1Q52">
    <property type="method" value="X-ray"/>
    <property type="resolution" value="1.80 A"/>
    <property type="chains" value="A/B/C/D/E/F/G/H/I/J/K/L=1-314"/>
</dbReference>
<dbReference type="PDB" id="1RJM">
    <property type="method" value="X-ray"/>
    <property type="resolution" value="2.15 A"/>
    <property type="chains" value="A/B/C=1-314"/>
</dbReference>
<dbReference type="PDB" id="1RJN">
    <property type="method" value="X-ray"/>
    <property type="resolution" value="2.30 A"/>
    <property type="chains" value="A/B/C=1-314"/>
</dbReference>
<dbReference type="PDB" id="3T8A">
    <property type="method" value="X-ray"/>
    <property type="resolution" value="2.24 A"/>
    <property type="chains" value="A/B/C=1-314"/>
</dbReference>
<dbReference type="PDB" id="3T8B">
    <property type="method" value="X-ray"/>
    <property type="resolution" value="1.65 A"/>
    <property type="chains" value="A/B=1-314"/>
</dbReference>
<dbReference type="PDB" id="4QII">
    <property type="method" value="X-ray"/>
    <property type="resolution" value="1.64 A"/>
    <property type="chains" value="A/B/C/D/E/F/G/H/I/J/K/L=1-314"/>
</dbReference>
<dbReference type="PDB" id="4QIJ">
    <property type="method" value="X-ray"/>
    <property type="resolution" value="2.20 A"/>
    <property type="chains" value="A/B/C/D/E/F/G/H/I/J/K/L=1-314"/>
</dbReference>
<dbReference type="PDBsum" id="1Q51"/>
<dbReference type="PDBsum" id="1Q52"/>
<dbReference type="PDBsum" id="1RJM"/>
<dbReference type="PDBsum" id="1RJN"/>
<dbReference type="PDBsum" id="3T8A"/>
<dbReference type="PDBsum" id="3T8B"/>
<dbReference type="PDBsum" id="4QII"/>
<dbReference type="PDBsum" id="4QIJ"/>
<dbReference type="SMR" id="P9WNP5"/>
<dbReference type="FunCoup" id="P9WNP5">
    <property type="interactions" value="170"/>
</dbReference>
<dbReference type="STRING" id="83332.Rv0548c"/>
<dbReference type="BindingDB" id="P9WNP5"/>
<dbReference type="ChEMBL" id="CHEMBL1275214"/>
<dbReference type="DrugBank" id="DB03059">
    <property type="generic name" value="Acetoacetyl-CoA"/>
</dbReference>
<dbReference type="DrugBank" id="DB01992">
    <property type="generic name" value="Coenzyme A"/>
</dbReference>
<dbReference type="PaxDb" id="83332-Rv0548c"/>
<dbReference type="DNASU" id="887529"/>
<dbReference type="GeneID" id="887529"/>
<dbReference type="KEGG" id="mtu:Rv0548c"/>
<dbReference type="KEGG" id="mtv:RVBD_0548c"/>
<dbReference type="PATRIC" id="fig|83332.111.peg.604"/>
<dbReference type="TubercuList" id="Rv0548c"/>
<dbReference type="eggNOG" id="COG0447">
    <property type="taxonomic scope" value="Bacteria"/>
</dbReference>
<dbReference type="InParanoid" id="P9WNP5"/>
<dbReference type="OrthoDB" id="9807606at2"/>
<dbReference type="PhylomeDB" id="P9WNP5"/>
<dbReference type="BioCyc" id="MetaCyc:G185E-4681-MONOMER"/>
<dbReference type="BRENDA" id="4.1.3.36">
    <property type="organism ID" value="3445"/>
</dbReference>
<dbReference type="UniPathway" id="UPA00079"/>
<dbReference type="UniPathway" id="UPA01057">
    <property type="reaction ID" value="UER00167"/>
</dbReference>
<dbReference type="EvolutionaryTrace" id="P9WNP5"/>
<dbReference type="PRO" id="PR:P9WNP5"/>
<dbReference type="Proteomes" id="UP000001584">
    <property type="component" value="Chromosome"/>
</dbReference>
<dbReference type="GO" id="GO:0005886">
    <property type="term" value="C:plasma membrane"/>
    <property type="evidence" value="ECO:0007005"/>
    <property type="project" value="MTBBASE"/>
</dbReference>
<dbReference type="GO" id="GO:0008935">
    <property type="term" value="F:1,4-dihydroxy-2-naphthoyl-CoA synthase activity"/>
    <property type="evidence" value="ECO:0000314"/>
    <property type="project" value="UniProtKB"/>
</dbReference>
<dbReference type="GO" id="GO:0009234">
    <property type="term" value="P:menaquinone biosynthetic process"/>
    <property type="evidence" value="ECO:0000314"/>
    <property type="project" value="UniProtKB"/>
</dbReference>
<dbReference type="GO" id="GO:0034214">
    <property type="term" value="P:protein hexamerization"/>
    <property type="evidence" value="ECO:0000314"/>
    <property type="project" value="MTBBASE"/>
</dbReference>
<dbReference type="CDD" id="cd06558">
    <property type="entry name" value="crotonase-like"/>
    <property type="match status" value="1"/>
</dbReference>
<dbReference type="FunFam" id="1.10.12.10:FF:000003">
    <property type="entry name" value="1,4-dihydroxy-2-naphthoyl-CoA synthase"/>
    <property type="match status" value="1"/>
</dbReference>
<dbReference type="FunFam" id="3.90.226.10:FF:000003">
    <property type="entry name" value="1,4-dihydroxy-2-naphthoyl-CoA synthase"/>
    <property type="match status" value="1"/>
</dbReference>
<dbReference type="Gene3D" id="3.90.226.10">
    <property type="entry name" value="2-enoyl-CoA Hydratase, Chain A, domain 1"/>
    <property type="match status" value="1"/>
</dbReference>
<dbReference type="Gene3D" id="1.10.12.10">
    <property type="entry name" value="Lyase 2-enoyl-coa Hydratase, Chain A, domain 2"/>
    <property type="match status" value="1"/>
</dbReference>
<dbReference type="HAMAP" id="MF_01934">
    <property type="entry name" value="MenB"/>
    <property type="match status" value="1"/>
</dbReference>
<dbReference type="InterPro" id="IPR029045">
    <property type="entry name" value="ClpP/crotonase-like_dom_sf"/>
</dbReference>
<dbReference type="InterPro" id="IPR010198">
    <property type="entry name" value="DHNA-CoA_synthase_MenB"/>
</dbReference>
<dbReference type="InterPro" id="IPR001753">
    <property type="entry name" value="Enoyl-CoA_hydra/iso"/>
</dbReference>
<dbReference type="InterPro" id="IPR014748">
    <property type="entry name" value="Enoyl-CoA_hydra_C"/>
</dbReference>
<dbReference type="NCBIfam" id="TIGR01929">
    <property type="entry name" value="menB"/>
    <property type="match status" value="1"/>
</dbReference>
<dbReference type="NCBIfam" id="NF006186">
    <property type="entry name" value="PRK08321.1"/>
    <property type="match status" value="1"/>
</dbReference>
<dbReference type="PANTHER" id="PTHR43113:SF1">
    <property type="entry name" value="1,4-DIHYDROXY-2-NAPHTHOYL-COA SYNTHASE, PEROXISOMAL"/>
    <property type="match status" value="1"/>
</dbReference>
<dbReference type="PANTHER" id="PTHR43113">
    <property type="entry name" value="NUCLEOSIDE-DIPHOSPHATE-SUGAR EPIMERASE"/>
    <property type="match status" value="1"/>
</dbReference>
<dbReference type="Pfam" id="PF00378">
    <property type="entry name" value="ECH_1"/>
    <property type="match status" value="1"/>
</dbReference>
<dbReference type="SUPFAM" id="SSF52096">
    <property type="entry name" value="ClpP/crotonase"/>
    <property type="match status" value="1"/>
</dbReference>